<comment type="similarity">
    <text evidence="2">Belongs to the IER family.</text>
</comment>
<protein>
    <recommendedName>
        <fullName>Immediate early response gene 5-like protein</fullName>
    </recommendedName>
</protein>
<reference key="1">
    <citation type="journal article" date="2004" name="Genome Res.">
        <title>The status, quality, and expansion of the NIH full-length cDNA project: the Mammalian Gene Collection (MGC).</title>
        <authorList>
            <consortium name="The MGC Project Team"/>
        </authorList>
    </citation>
    <scope>NUCLEOTIDE SEQUENCE [LARGE SCALE MRNA]</scope>
    <source>
        <tissue>Heart</tissue>
    </source>
</reference>
<gene>
    <name type="primary">Ier5l</name>
</gene>
<proteinExistence type="evidence at transcript level"/>
<evidence type="ECO:0000256" key="1">
    <source>
        <dbReference type="SAM" id="MobiDB-lite"/>
    </source>
</evidence>
<evidence type="ECO:0000305" key="2"/>
<name>IER5L_RAT</name>
<organism>
    <name type="scientific">Rattus norvegicus</name>
    <name type="common">Rat</name>
    <dbReference type="NCBI Taxonomy" id="10116"/>
    <lineage>
        <taxon>Eukaryota</taxon>
        <taxon>Metazoa</taxon>
        <taxon>Chordata</taxon>
        <taxon>Craniata</taxon>
        <taxon>Vertebrata</taxon>
        <taxon>Euteleostomi</taxon>
        <taxon>Mammalia</taxon>
        <taxon>Eutheria</taxon>
        <taxon>Euarchontoglires</taxon>
        <taxon>Glires</taxon>
        <taxon>Rodentia</taxon>
        <taxon>Myomorpha</taxon>
        <taxon>Muroidea</taxon>
        <taxon>Muridae</taxon>
        <taxon>Murinae</taxon>
        <taxon>Rattus</taxon>
    </lineage>
</organism>
<feature type="chain" id="PRO_0000334658" description="Immediate early response gene 5-like protein">
    <location>
        <begin position="1"/>
        <end position="409"/>
    </location>
</feature>
<feature type="region of interest" description="Disordered" evidence="1">
    <location>
        <begin position="168"/>
        <end position="237"/>
    </location>
</feature>
<feature type="region of interest" description="Disordered" evidence="1">
    <location>
        <begin position="312"/>
        <end position="335"/>
    </location>
</feature>
<feature type="compositionally biased region" description="Pro residues" evidence="1">
    <location>
        <begin position="184"/>
        <end position="195"/>
    </location>
</feature>
<feature type="compositionally biased region" description="Low complexity" evidence="1">
    <location>
        <begin position="196"/>
        <end position="212"/>
    </location>
</feature>
<feature type="compositionally biased region" description="Low complexity" evidence="1">
    <location>
        <begin position="220"/>
        <end position="237"/>
    </location>
</feature>
<feature type="compositionally biased region" description="Acidic residues" evidence="1">
    <location>
        <begin position="313"/>
        <end position="324"/>
    </location>
</feature>
<accession>Q5PQP0</accession>
<keyword id="KW-1185">Reference proteome</keyword>
<dbReference type="EMBL" id="BC087095">
    <property type="protein sequence ID" value="AAH87095.1"/>
    <property type="molecule type" value="mRNA"/>
</dbReference>
<dbReference type="RefSeq" id="NP_001020212.1">
    <property type="nucleotide sequence ID" value="NM_001025041.1"/>
</dbReference>
<dbReference type="FunCoup" id="Q5PQP0">
    <property type="interactions" value="131"/>
</dbReference>
<dbReference type="STRING" id="10116.ENSRNOP00000060846"/>
<dbReference type="PhosphoSitePlus" id="Q5PQP0"/>
<dbReference type="PaxDb" id="10116-ENSRNOP00000060846"/>
<dbReference type="Ensembl" id="ENSRNOT00000036770.5">
    <property type="protein sequence ID" value="ENSRNOP00000060846.1"/>
    <property type="gene ID" value="ENSRNOG00000024846.5"/>
</dbReference>
<dbReference type="GeneID" id="499772"/>
<dbReference type="KEGG" id="rno:499772"/>
<dbReference type="UCSC" id="RGD:1561058">
    <property type="organism name" value="rat"/>
</dbReference>
<dbReference type="AGR" id="RGD:1561058"/>
<dbReference type="CTD" id="389792"/>
<dbReference type="RGD" id="1561058">
    <property type="gene designation" value="Ier5l"/>
</dbReference>
<dbReference type="eggNOG" id="ENOG502QUU4">
    <property type="taxonomic scope" value="Eukaryota"/>
</dbReference>
<dbReference type="GeneTree" id="ENSGT00900000141021"/>
<dbReference type="HOGENOM" id="CLU_057338_1_1_1"/>
<dbReference type="InParanoid" id="Q5PQP0"/>
<dbReference type="OMA" id="QDCCCDA"/>
<dbReference type="OrthoDB" id="6358394at2759"/>
<dbReference type="PhylomeDB" id="Q5PQP0"/>
<dbReference type="TreeFam" id="TF331376"/>
<dbReference type="PRO" id="PR:Q5PQP0"/>
<dbReference type="Proteomes" id="UP000002494">
    <property type="component" value="Chromosome 3"/>
</dbReference>
<dbReference type="Bgee" id="ENSRNOG00000024846">
    <property type="expression patterns" value="Expressed in pancreas and 19 other cell types or tissues"/>
</dbReference>
<dbReference type="InterPro" id="IPR008653">
    <property type="entry name" value="IER"/>
</dbReference>
<dbReference type="PANTHER" id="PTHR15895">
    <property type="entry name" value="IMMEDIATE EARLY RESPONSE GENE"/>
    <property type="match status" value="1"/>
</dbReference>
<dbReference type="Pfam" id="PF05760">
    <property type="entry name" value="IER"/>
    <property type="match status" value="1"/>
</dbReference>
<sequence>MECALDAQSLISISLRKIHSSRTQRGGIKLHKNLLVSYVLRNARQLYLSERYAELYRRQQQQQQQQQQPPHHQHQHLAYAAPGMPASAADFGPLQLGGGGDAEAREPVARHQLHQLHQLHQLHLQQQLHQHQHPAPRGCTAAAPVAVAGAPAGCAGALSELPGCAALQPPHGAPHRGQHLEPLQPGPAPLPPPAPAALCPRDPRVPAACSAPSAPPGAAPPTVAASSPPASPAPSSSPGFYRGAYPAPSDFGVHCSSQTTVLDLDTHVVTTVENGYLHQDCCASAHCPCCGQGAPGPGLASAAGCKRKYYPGQEEEDDEEEDAGDLGAEPPGGTPFAPCKRARFEDFCPDSSPDASNISNLISIFGSGFSGLVSRQPDSSEQPPPLNGQLCAKQALASLGAWTRAIVAF</sequence>